<proteinExistence type="inferred from homology"/>
<name>AROA_DICNO</name>
<dbReference type="EC" id="2.5.1.19" evidence="1"/>
<dbReference type="EMBL" id="Z29339">
    <property type="protein sequence ID" value="CAA82544.1"/>
    <property type="molecule type" value="Genomic_DNA"/>
</dbReference>
<dbReference type="PIR" id="S44096">
    <property type="entry name" value="S44096"/>
</dbReference>
<dbReference type="SMR" id="Q46550"/>
<dbReference type="UniPathway" id="UPA00053">
    <property type="reaction ID" value="UER00089"/>
</dbReference>
<dbReference type="GO" id="GO:0005737">
    <property type="term" value="C:cytoplasm"/>
    <property type="evidence" value="ECO:0007669"/>
    <property type="project" value="UniProtKB-SubCell"/>
</dbReference>
<dbReference type="GO" id="GO:0003866">
    <property type="term" value="F:3-phosphoshikimate 1-carboxyvinyltransferase activity"/>
    <property type="evidence" value="ECO:0007669"/>
    <property type="project" value="UniProtKB-UniRule"/>
</dbReference>
<dbReference type="GO" id="GO:0008652">
    <property type="term" value="P:amino acid biosynthetic process"/>
    <property type="evidence" value="ECO:0007669"/>
    <property type="project" value="UniProtKB-KW"/>
</dbReference>
<dbReference type="GO" id="GO:0009073">
    <property type="term" value="P:aromatic amino acid family biosynthetic process"/>
    <property type="evidence" value="ECO:0007669"/>
    <property type="project" value="UniProtKB-KW"/>
</dbReference>
<dbReference type="GO" id="GO:0009423">
    <property type="term" value="P:chorismate biosynthetic process"/>
    <property type="evidence" value="ECO:0007669"/>
    <property type="project" value="UniProtKB-UniRule"/>
</dbReference>
<dbReference type="CDD" id="cd01556">
    <property type="entry name" value="EPSP_synthase"/>
    <property type="match status" value="1"/>
</dbReference>
<dbReference type="FunFam" id="3.65.10.10:FF:000005">
    <property type="entry name" value="3-phosphoshikimate 1-carboxyvinyltransferase"/>
    <property type="match status" value="1"/>
</dbReference>
<dbReference type="Gene3D" id="3.65.10.10">
    <property type="entry name" value="Enolpyruvate transferase domain"/>
    <property type="match status" value="2"/>
</dbReference>
<dbReference type="HAMAP" id="MF_00210">
    <property type="entry name" value="EPSP_synth"/>
    <property type="match status" value="1"/>
</dbReference>
<dbReference type="InterPro" id="IPR001986">
    <property type="entry name" value="Enolpyruvate_Tfrase_dom"/>
</dbReference>
<dbReference type="InterPro" id="IPR036968">
    <property type="entry name" value="Enolpyruvate_Tfrase_sf"/>
</dbReference>
<dbReference type="InterPro" id="IPR006264">
    <property type="entry name" value="EPSP_synthase"/>
</dbReference>
<dbReference type="InterPro" id="IPR023193">
    <property type="entry name" value="EPSP_synthase_CS"/>
</dbReference>
<dbReference type="InterPro" id="IPR013792">
    <property type="entry name" value="RNA3'P_cycl/enolpyr_Trfase_a/b"/>
</dbReference>
<dbReference type="NCBIfam" id="TIGR01356">
    <property type="entry name" value="aroA"/>
    <property type="match status" value="1"/>
</dbReference>
<dbReference type="PANTHER" id="PTHR21090">
    <property type="entry name" value="AROM/DEHYDROQUINATE SYNTHASE"/>
    <property type="match status" value="1"/>
</dbReference>
<dbReference type="PANTHER" id="PTHR21090:SF5">
    <property type="entry name" value="PENTAFUNCTIONAL AROM POLYPEPTIDE"/>
    <property type="match status" value="1"/>
</dbReference>
<dbReference type="Pfam" id="PF00275">
    <property type="entry name" value="EPSP_synthase"/>
    <property type="match status" value="1"/>
</dbReference>
<dbReference type="PIRSF" id="PIRSF000505">
    <property type="entry name" value="EPSPS"/>
    <property type="match status" value="1"/>
</dbReference>
<dbReference type="SUPFAM" id="SSF55205">
    <property type="entry name" value="EPT/RTPC-like"/>
    <property type="match status" value="1"/>
</dbReference>
<dbReference type="PROSITE" id="PS00104">
    <property type="entry name" value="EPSP_SYNTHASE_1"/>
    <property type="match status" value="1"/>
</dbReference>
<dbReference type="PROSITE" id="PS00885">
    <property type="entry name" value="EPSP_SYNTHASE_2"/>
    <property type="match status" value="1"/>
</dbReference>
<gene>
    <name evidence="1" type="primary">aroA</name>
</gene>
<evidence type="ECO:0000255" key="1">
    <source>
        <dbReference type="HAMAP-Rule" id="MF_00210"/>
    </source>
</evidence>
<evidence type="ECO:0000305" key="2"/>
<comment type="function">
    <text evidence="1">Catalyzes the transfer of the enolpyruvyl moiety of phosphoenolpyruvate (PEP) to the 5-hydroxyl of shikimate-3-phosphate (S3P) to produce enolpyruvyl shikimate-3-phosphate and inorganic phosphate.</text>
</comment>
<comment type="catalytic activity">
    <reaction evidence="1">
        <text>3-phosphoshikimate + phosphoenolpyruvate = 5-O-(1-carboxyvinyl)-3-phosphoshikimate + phosphate</text>
        <dbReference type="Rhea" id="RHEA:21256"/>
        <dbReference type="ChEBI" id="CHEBI:43474"/>
        <dbReference type="ChEBI" id="CHEBI:57701"/>
        <dbReference type="ChEBI" id="CHEBI:58702"/>
        <dbReference type="ChEBI" id="CHEBI:145989"/>
        <dbReference type="EC" id="2.5.1.19"/>
    </reaction>
    <physiologicalReaction direction="left-to-right" evidence="1">
        <dbReference type="Rhea" id="RHEA:21257"/>
    </physiologicalReaction>
</comment>
<comment type="pathway">
    <text evidence="1">Metabolic intermediate biosynthesis; chorismate biosynthesis; chorismate from D-erythrose 4-phosphate and phosphoenolpyruvate: step 6/7.</text>
</comment>
<comment type="subunit">
    <text evidence="1">Monomer.</text>
</comment>
<comment type="subcellular location">
    <subcellularLocation>
        <location evidence="1">Cytoplasm</location>
    </subcellularLocation>
</comment>
<comment type="similarity">
    <text evidence="1 2">Belongs to the EPSP synthase family.</text>
</comment>
<keyword id="KW-0028">Amino-acid biosynthesis</keyword>
<keyword id="KW-0057">Aromatic amino acid biosynthesis</keyword>
<keyword id="KW-0963">Cytoplasm</keyword>
<keyword id="KW-0808">Transferase</keyword>
<protein>
    <recommendedName>
        <fullName evidence="1">3-phosphoshikimate 1-carboxyvinyltransferase</fullName>
        <ecNumber evidence="1">2.5.1.19</ecNumber>
    </recommendedName>
    <alternativeName>
        <fullName evidence="1">5-enolpyruvylshikimate-3-phosphate synthase</fullName>
        <shortName evidence="1">EPSP synthase</shortName>
        <shortName evidence="1">EPSPS</shortName>
    </alternativeName>
</protein>
<reference key="1">
    <citation type="journal article" date="1994" name="Gene">
        <title>Sequencing and expression of the aroA gene from Dichelobacter nodosus.</title>
        <authorList>
            <person name="Alm R.A."/>
            <person name="Dalrymple B.P."/>
            <person name="Mattick J.S."/>
        </authorList>
    </citation>
    <scope>NUCLEOTIDE SEQUENCE [GENOMIC DNA]</scope>
    <source>
        <strain>VCS 1001 / A198</strain>
    </source>
</reference>
<organism>
    <name type="scientific">Dichelobacter nodosus</name>
    <name type="common">Bacteroides nodosus</name>
    <dbReference type="NCBI Taxonomy" id="870"/>
    <lineage>
        <taxon>Bacteria</taxon>
        <taxon>Pseudomonadati</taxon>
        <taxon>Pseudomonadota</taxon>
        <taxon>Gammaproteobacteria</taxon>
        <taxon>Cardiobacteriales</taxon>
        <taxon>Cardiobacteriaceae</taxon>
        <taxon>Dichelobacter</taxon>
    </lineage>
</organism>
<accession>Q46550</accession>
<feature type="chain" id="PRO_0000088225" description="3-phosphoshikimate 1-carboxyvinyltransferase">
    <location>
        <begin position="1"/>
        <end position="443"/>
    </location>
</feature>
<feature type="active site" description="Proton acceptor" evidence="1">
    <location>
        <position position="316"/>
    </location>
</feature>
<feature type="binding site" evidence="1">
    <location>
        <position position="24"/>
    </location>
    <ligand>
        <name>3-phosphoshikimate</name>
        <dbReference type="ChEBI" id="CHEBI:145989"/>
    </ligand>
</feature>
<feature type="binding site" evidence="1">
    <location>
        <position position="24"/>
    </location>
    <ligand>
        <name>phosphoenolpyruvate</name>
        <dbReference type="ChEBI" id="CHEBI:58702"/>
    </ligand>
</feature>
<feature type="binding site" evidence="1">
    <location>
        <position position="25"/>
    </location>
    <ligand>
        <name>3-phosphoshikimate</name>
        <dbReference type="ChEBI" id="CHEBI:145989"/>
    </ligand>
</feature>
<feature type="binding site" evidence="1">
    <location>
        <position position="29"/>
    </location>
    <ligand>
        <name>3-phosphoshikimate</name>
        <dbReference type="ChEBI" id="CHEBI:145989"/>
    </ligand>
</feature>
<feature type="binding site" evidence="1">
    <location>
        <position position="96"/>
    </location>
    <ligand>
        <name>phosphoenolpyruvate</name>
        <dbReference type="ChEBI" id="CHEBI:58702"/>
    </ligand>
</feature>
<feature type="binding site" evidence="1">
    <location>
        <position position="124"/>
    </location>
    <ligand>
        <name>phosphoenolpyruvate</name>
        <dbReference type="ChEBI" id="CHEBI:58702"/>
    </ligand>
</feature>
<feature type="binding site" evidence="1">
    <location>
        <position position="168"/>
    </location>
    <ligand>
        <name>3-phosphoshikimate</name>
        <dbReference type="ChEBI" id="CHEBI:145989"/>
    </ligand>
</feature>
<feature type="binding site" evidence="1">
    <location>
        <position position="170"/>
    </location>
    <ligand>
        <name>3-phosphoshikimate</name>
        <dbReference type="ChEBI" id="CHEBI:145989"/>
    </ligand>
</feature>
<feature type="binding site" evidence="1">
    <location>
        <position position="170"/>
    </location>
    <ligand>
        <name>phosphoenolpyruvate</name>
        <dbReference type="ChEBI" id="CHEBI:58702"/>
    </ligand>
</feature>
<feature type="binding site" evidence="1">
    <location>
        <position position="316"/>
    </location>
    <ligand>
        <name>3-phosphoshikimate</name>
        <dbReference type="ChEBI" id="CHEBI:145989"/>
    </ligand>
</feature>
<feature type="binding site" evidence="1">
    <location>
        <position position="343"/>
    </location>
    <ligand>
        <name>3-phosphoshikimate</name>
        <dbReference type="ChEBI" id="CHEBI:145989"/>
    </ligand>
</feature>
<feature type="binding site" evidence="1">
    <location>
        <position position="347"/>
    </location>
    <ligand>
        <name>phosphoenolpyruvate</name>
        <dbReference type="ChEBI" id="CHEBI:58702"/>
    </ligand>
</feature>
<feature type="binding site" evidence="1">
    <location>
        <position position="391"/>
    </location>
    <ligand>
        <name>phosphoenolpyruvate</name>
        <dbReference type="ChEBI" id="CHEBI:58702"/>
    </ligand>
</feature>
<sequence>MMTNIWHTAPVSALSGEITICGDKSMSHRALLLAALAEGQTEIRGFLACADCLATRQALRALGVDIQREKEIVTIRGVGFLGLQPPKAPLNMQNSGTSMRLLAGILAAQRFESVLCGDESLEKRPMQRIITPLVQMGAKIVSHSNFTAPLHISGRPLTGIDYALPLPSAQLKSCLILAGLLADGTTRLHTCGISRDHTERMLPLFGGALEIKKEQIIVTGGQKLHGCVLDIVGDLSAAAFFMVAALIAPRAEVVIRNVGINPTRAAIITLLQKMGGRIELHHQRFWGAEPVADIVVYHSKLRGITVAPEWIANAIDELPIFFIAAACAEGTTFVGNLSELRVKESDRLAAMAQNLQTLGVACDVGADFIHIYGRSDRQFLPARVNSFGDHRIAMSLAVAGVRAAGELLIDDGAVAAVSMPQFRDFAAAIGMNVGEKDAKNCHD</sequence>